<dbReference type="EC" id="6.3.4.2" evidence="1 2"/>
<dbReference type="EMBL" id="AE006641">
    <property type="protein sequence ID" value="AAK40547.1"/>
    <property type="molecule type" value="Genomic_DNA"/>
</dbReference>
<dbReference type="PIR" id="D90161">
    <property type="entry name" value="D90161"/>
</dbReference>
<dbReference type="RefSeq" id="WP_009990444.1">
    <property type="nucleotide sequence ID" value="NC_002754.1"/>
</dbReference>
<dbReference type="PDB" id="3NVA">
    <property type="method" value="X-ray"/>
    <property type="resolution" value="2.50 A"/>
    <property type="chains" value="A/B=1-535"/>
</dbReference>
<dbReference type="PDBsum" id="3NVA"/>
<dbReference type="SMR" id="Q980S6"/>
<dbReference type="FunCoup" id="Q980S6">
    <property type="interactions" value="286"/>
</dbReference>
<dbReference type="STRING" id="273057.SSO0201"/>
<dbReference type="PaxDb" id="273057-SSO0201"/>
<dbReference type="EnsemblBacteria" id="AAK40547">
    <property type="protein sequence ID" value="AAK40547"/>
    <property type="gene ID" value="SSO0201"/>
</dbReference>
<dbReference type="KEGG" id="sso:SSO0201"/>
<dbReference type="PATRIC" id="fig|273057.12.peg.201"/>
<dbReference type="eggNOG" id="arCOG00063">
    <property type="taxonomic scope" value="Archaea"/>
</dbReference>
<dbReference type="HOGENOM" id="CLU_011675_5_0_2"/>
<dbReference type="InParanoid" id="Q980S6"/>
<dbReference type="PhylomeDB" id="Q980S6"/>
<dbReference type="BRENDA" id="6.3.4.2">
    <property type="organism ID" value="6163"/>
</dbReference>
<dbReference type="UniPathway" id="UPA00159">
    <property type="reaction ID" value="UER00277"/>
</dbReference>
<dbReference type="EvolutionaryTrace" id="Q980S6"/>
<dbReference type="Proteomes" id="UP000001974">
    <property type="component" value="Chromosome"/>
</dbReference>
<dbReference type="GO" id="GO:0005524">
    <property type="term" value="F:ATP binding"/>
    <property type="evidence" value="ECO:0007669"/>
    <property type="project" value="UniProtKB-KW"/>
</dbReference>
<dbReference type="GO" id="GO:0003883">
    <property type="term" value="F:CTP synthase activity"/>
    <property type="evidence" value="ECO:0000318"/>
    <property type="project" value="GO_Central"/>
</dbReference>
<dbReference type="GO" id="GO:0004359">
    <property type="term" value="F:glutaminase activity"/>
    <property type="evidence" value="ECO:0007669"/>
    <property type="project" value="RHEA"/>
</dbReference>
<dbReference type="GO" id="GO:0042802">
    <property type="term" value="F:identical protein binding"/>
    <property type="evidence" value="ECO:0000318"/>
    <property type="project" value="GO_Central"/>
</dbReference>
<dbReference type="GO" id="GO:0046872">
    <property type="term" value="F:metal ion binding"/>
    <property type="evidence" value="ECO:0007669"/>
    <property type="project" value="UniProtKB-KW"/>
</dbReference>
<dbReference type="GO" id="GO:0044210">
    <property type="term" value="P:'de novo' CTP biosynthetic process"/>
    <property type="evidence" value="ECO:0007669"/>
    <property type="project" value="UniProtKB-UniRule"/>
</dbReference>
<dbReference type="GO" id="GO:0006241">
    <property type="term" value="P:CTP biosynthetic process"/>
    <property type="evidence" value="ECO:0000318"/>
    <property type="project" value="GO_Central"/>
</dbReference>
<dbReference type="GO" id="GO:0019856">
    <property type="term" value="P:pyrimidine nucleobase biosynthetic process"/>
    <property type="evidence" value="ECO:0000318"/>
    <property type="project" value="GO_Central"/>
</dbReference>
<dbReference type="CDD" id="cd03113">
    <property type="entry name" value="CTPS_N"/>
    <property type="match status" value="1"/>
</dbReference>
<dbReference type="CDD" id="cd01746">
    <property type="entry name" value="GATase1_CTP_Synthase"/>
    <property type="match status" value="1"/>
</dbReference>
<dbReference type="FunFam" id="3.40.50.300:FF:000009">
    <property type="entry name" value="CTP synthase"/>
    <property type="match status" value="1"/>
</dbReference>
<dbReference type="FunFam" id="3.40.50.880:FF:000002">
    <property type="entry name" value="CTP synthase"/>
    <property type="match status" value="1"/>
</dbReference>
<dbReference type="Gene3D" id="3.40.50.880">
    <property type="match status" value="1"/>
</dbReference>
<dbReference type="Gene3D" id="3.40.50.300">
    <property type="entry name" value="P-loop containing nucleotide triphosphate hydrolases"/>
    <property type="match status" value="1"/>
</dbReference>
<dbReference type="HAMAP" id="MF_01227">
    <property type="entry name" value="PyrG"/>
    <property type="match status" value="1"/>
</dbReference>
<dbReference type="InterPro" id="IPR029062">
    <property type="entry name" value="Class_I_gatase-like"/>
</dbReference>
<dbReference type="InterPro" id="IPR004468">
    <property type="entry name" value="CTP_synthase"/>
</dbReference>
<dbReference type="InterPro" id="IPR017456">
    <property type="entry name" value="CTP_synthase_N"/>
</dbReference>
<dbReference type="InterPro" id="IPR017926">
    <property type="entry name" value="GATASE"/>
</dbReference>
<dbReference type="InterPro" id="IPR033828">
    <property type="entry name" value="GATase1_CTP_Synthase"/>
</dbReference>
<dbReference type="InterPro" id="IPR027417">
    <property type="entry name" value="P-loop_NTPase"/>
</dbReference>
<dbReference type="NCBIfam" id="NF003792">
    <property type="entry name" value="PRK05380.1"/>
    <property type="match status" value="1"/>
</dbReference>
<dbReference type="NCBIfam" id="TIGR00337">
    <property type="entry name" value="PyrG"/>
    <property type="match status" value="1"/>
</dbReference>
<dbReference type="PANTHER" id="PTHR11550">
    <property type="entry name" value="CTP SYNTHASE"/>
    <property type="match status" value="1"/>
</dbReference>
<dbReference type="PANTHER" id="PTHR11550:SF0">
    <property type="entry name" value="CTP SYNTHASE-RELATED"/>
    <property type="match status" value="1"/>
</dbReference>
<dbReference type="Pfam" id="PF06418">
    <property type="entry name" value="CTP_synth_N"/>
    <property type="match status" value="1"/>
</dbReference>
<dbReference type="Pfam" id="PF00117">
    <property type="entry name" value="GATase"/>
    <property type="match status" value="1"/>
</dbReference>
<dbReference type="SUPFAM" id="SSF52317">
    <property type="entry name" value="Class I glutamine amidotransferase-like"/>
    <property type="match status" value="1"/>
</dbReference>
<dbReference type="SUPFAM" id="SSF52540">
    <property type="entry name" value="P-loop containing nucleoside triphosphate hydrolases"/>
    <property type="match status" value="1"/>
</dbReference>
<dbReference type="PROSITE" id="PS51273">
    <property type="entry name" value="GATASE_TYPE_1"/>
    <property type="match status" value="1"/>
</dbReference>
<name>PYRG_SACS2</name>
<accession>Q980S6</accession>
<protein>
    <recommendedName>
        <fullName evidence="1 3">CTP synthase</fullName>
        <ecNumber evidence="1 2">6.3.4.2</ecNumber>
    </recommendedName>
    <alternativeName>
        <fullName evidence="1">Cytidine 5'-triphosphate synthase</fullName>
    </alternativeName>
    <alternativeName>
        <fullName evidence="1">Cytidine triphosphate synthetase</fullName>
        <shortName evidence="1">CTP synthetase</shortName>
        <shortName evidence="1">CTPS</shortName>
    </alternativeName>
    <alternativeName>
        <fullName evidence="1">UTP--ammonia ligase</fullName>
    </alternativeName>
</protein>
<sequence>MPNKYIVVTGGVLSSVGKGTLVASIGMLLKRRGYNVTAVKIDPYINVDAGTMNPYMHGEVFVTEDGAETDLDLGHYERFMDVNMTKYNNITAGKVYFEVIKKEREGKYLGQTVQIIPHVTDQIKDMIRYASKINNAEITLVEIGGTVGDIESLPFLEAVRQLKLEEGEDNVIFVHIALVEYLSVTGELKTKPLQHSVQELRRIGIQPDFIVGRATLPLDDETRRKIALFTNVKVDHIVSSYDVETSYEVPIILESQKLVSKILSRLKLEDRQVDLTDWISFVNNIKGINSKKTINIALVGKYTKLKDSYISIKEAIYHASAYIGVRPKLIWIESTDLESDTKNLNEILGNVNGIIVLPGFGSRGAEGKIKAIKYAREHNIPFLGICFGFQLSIVEFARDVLGLSEANSTEINPNTKDPVITLLDEQKNVTQLGGTMRLGAQKIILKEGTIAYQLYGKKVVYERHRHRYEVNPKYVDILEDAGLVVSGISENGLVEIIELPSNKFFVATQAHPEFKSRPTNPSPIYLGFIRAVASL</sequence>
<organism>
    <name type="scientific">Saccharolobus solfataricus (strain ATCC 35092 / DSM 1617 / JCM 11322 / P2)</name>
    <name type="common">Sulfolobus solfataricus</name>
    <dbReference type="NCBI Taxonomy" id="273057"/>
    <lineage>
        <taxon>Archaea</taxon>
        <taxon>Thermoproteota</taxon>
        <taxon>Thermoprotei</taxon>
        <taxon>Sulfolobales</taxon>
        <taxon>Sulfolobaceae</taxon>
        <taxon>Saccharolobus</taxon>
    </lineage>
</organism>
<comment type="function">
    <text evidence="1 2">Catalyzes the ATP-dependent amination of UTP to CTP with either L-glutamine or ammonia as the source of nitrogen (PubMed:21301086). Regulates intracellular CTP levels through interactions with the four ribonucleotide triphosphates (By similarity).</text>
</comment>
<comment type="catalytic activity">
    <reaction evidence="1 2">
        <text>UTP + L-glutamine + ATP + H2O = CTP + L-glutamate + ADP + phosphate + 2 H(+)</text>
        <dbReference type="Rhea" id="RHEA:26426"/>
        <dbReference type="ChEBI" id="CHEBI:15377"/>
        <dbReference type="ChEBI" id="CHEBI:15378"/>
        <dbReference type="ChEBI" id="CHEBI:29985"/>
        <dbReference type="ChEBI" id="CHEBI:30616"/>
        <dbReference type="ChEBI" id="CHEBI:37563"/>
        <dbReference type="ChEBI" id="CHEBI:43474"/>
        <dbReference type="ChEBI" id="CHEBI:46398"/>
        <dbReference type="ChEBI" id="CHEBI:58359"/>
        <dbReference type="ChEBI" id="CHEBI:456216"/>
        <dbReference type="EC" id="6.3.4.2"/>
    </reaction>
</comment>
<comment type="catalytic activity">
    <reaction evidence="1">
        <text>L-glutamine + H2O = L-glutamate + NH4(+)</text>
        <dbReference type="Rhea" id="RHEA:15889"/>
        <dbReference type="ChEBI" id="CHEBI:15377"/>
        <dbReference type="ChEBI" id="CHEBI:28938"/>
        <dbReference type="ChEBI" id="CHEBI:29985"/>
        <dbReference type="ChEBI" id="CHEBI:58359"/>
    </reaction>
</comment>
<comment type="catalytic activity">
    <reaction evidence="1">
        <text>UTP + NH4(+) + ATP = CTP + ADP + phosphate + 2 H(+)</text>
        <dbReference type="Rhea" id="RHEA:16597"/>
        <dbReference type="ChEBI" id="CHEBI:15378"/>
        <dbReference type="ChEBI" id="CHEBI:28938"/>
        <dbReference type="ChEBI" id="CHEBI:30616"/>
        <dbReference type="ChEBI" id="CHEBI:37563"/>
        <dbReference type="ChEBI" id="CHEBI:43474"/>
        <dbReference type="ChEBI" id="CHEBI:46398"/>
        <dbReference type="ChEBI" id="CHEBI:456216"/>
    </reaction>
</comment>
<comment type="activity regulation">
    <text evidence="1">Allosterically activated by GTP, when glutamine is the substrate; GTP has no effect on the reaction when ammonia is the substrate. The allosteric effector GTP functions by stabilizing the protein conformation that binds the tetrahedral intermediate(s) formed during glutamine hydrolysis. Inhibited by the product CTP, via allosteric rather than competitive inhibition.</text>
</comment>
<comment type="pathway">
    <text evidence="1">Pyrimidine metabolism; CTP biosynthesis via de novo pathway; CTP from UDP: step 2/2.</text>
</comment>
<comment type="subunit">
    <text evidence="2">Homotetramer in the presence of ATP and UTP. The enzyme dissociates into homodimers in the absence of substrate nucleotides.</text>
</comment>
<comment type="miscellaneous">
    <text evidence="1">CTPSs have evolved a hybrid strategy for distinguishing between UTP and CTP. The overlapping regions of the product feedback inhibitory and substrate sites recognize a common feature in both compounds, the triphosphate moiety. To differentiate isosteric substrate and product pyrimidine rings, an additional pocket far from the expected kinase/ligase catalytic site, specifically recognizes the cytosine and ribose portions of the product inhibitor.</text>
</comment>
<comment type="similarity">
    <text evidence="1">Belongs to the CTP synthase family.</text>
</comment>
<evidence type="ECO:0000255" key="1">
    <source>
        <dbReference type="HAMAP-Rule" id="MF_01227"/>
    </source>
</evidence>
<evidence type="ECO:0000269" key="2">
    <source>
    </source>
</evidence>
<evidence type="ECO:0000303" key="3">
    <source>
    </source>
</evidence>
<evidence type="ECO:0007829" key="4">
    <source>
        <dbReference type="PDB" id="3NVA"/>
    </source>
</evidence>
<gene>
    <name evidence="1" type="primary">pyrG</name>
    <name type="ordered locus">SSO0201</name>
</gene>
<keyword id="KW-0002">3D-structure</keyword>
<keyword id="KW-0067">ATP-binding</keyword>
<keyword id="KW-0315">Glutamine amidotransferase</keyword>
<keyword id="KW-0436">Ligase</keyword>
<keyword id="KW-0460">Magnesium</keyword>
<keyword id="KW-0479">Metal-binding</keyword>
<keyword id="KW-0547">Nucleotide-binding</keyword>
<keyword id="KW-0665">Pyrimidine biosynthesis</keyword>
<keyword id="KW-1185">Reference proteome</keyword>
<proteinExistence type="evidence at protein level"/>
<feature type="chain" id="PRO_0000138270" description="CTP synthase">
    <location>
        <begin position="1"/>
        <end position="535"/>
    </location>
</feature>
<feature type="domain" description="Glutamine amidotransferase type-1" evidence="1">
    <location>
        <begin position="302"/>
        <end position="535"/>
    </location>
</feature>
<feature type="region of interest" description="Amidoligase domain" evidence="1">
    <location>
        <begin position="1"/>
        <end position="268"/>
    </location>
</feature>
<feature type="active site" description="Nucleophile; for glutamine hydrolysis" evidence="1">
    <location>
        <position position="386"/>
    </location>
</feature>
<feature type="active site" evidence="1">
    <location>
        <position position="511"/>
    </location>
</feature>
<feature type="active site" evidence="1">
    <location>
        <position position="513"/>
    </location>
</feature>
<feature type="binding site" evidence="1">
    <location>
        <position position="14"/>
    </location>
    <ligand>
        <name>CTP</name>
        <dbReference type="ChEBI" id="CHEBI:37563"/>
        <note>allosteric inhibitor</note>
    </ligand>
</feature>
<feature type="binding site" evidence="1">
    <location>
        <position position="14"/>
    </location>
    <ligand>
        <name>UTP</name>
        <dbReference type="ChEBI" id="CHEBI:46398"/>
    </ligand>
</feature>
<feature type="binding site" evidence="1">
    <location>
        <begin position="15"/>
        <end position="20"/>
    </location>
    <ligand>
        <name>ATP</name>
        <dbReference type="ChEBI" id="CHEBI:30616"/>
    </ligand>
</feature>
<feature type="binding site" evidence="1">
    <location>
        <position position="55"/>
    </location>
    <ligand>
        <name>L-glutamine</name>
        <dbReference type="ChEBI" id="CHEBI:58359"/>
    </ligand>
</feature>
<feature type="binding site" evidence="1">
    <location>
        <position position="72"/>
    </location>
    <ligand>
        <name>ATP</name>
        <dbReference type="ChEBI" id="CHEBI:30616"/>
    </ligand>
</feature>
<feature type="binding site" evidence="1">
    <location>
        <position position="72"/>
    </location>
    <ligand>
        <name>Mg(2+)</name>
        <dbReference type="ChEBI" id="CHEBI:18420"/>
    </ligand>
</feature>
<feature type="binding site" evidence="1">
    <location>
        <position position="142"/>
    </location>
    <ligand>
        <name>Mg(2+)</name>
        <dbReference type="ChEBI" id="CHEBI:18420"/>
    </ligand>
</feature>
<feature type="binding site" evidence="1">
    <location>
        <begin position="149"/>
        <end position="151"/>
    </location>
    <ligand>
        <name>CTP</name>
        <dbReference type="ChEBI" id="CHEBI:37563"/>
        <note>allosteric inhibitor</note>
    </ligand>
</feature>
<feature type="binding site" evidence="1">
    <location>
        <begin position="189"/>
        <end position="194"/>
    </location>
    <ligand>
        <name>CTP</name>
        <dbReference type="ChEBI" id="CHEBI:37563"/>
        <note>allosteric inhibitor</note>
    </ligand>
</feature>
<feature type="binding site" evidence="1">
    <location>
        <begin position="189"/>
        <end position="194"/>
    </location>
    <ligand>
        <name>UTP</name>
        <dbReference type="ChEBI" id="CHEBI:46398"/>
    </ligand>
</feature>
<feature type="binding site" evidence="1">
    <location>
        <position position="225"/>
    </location>
    <ligand>
        <name>CTP</name>
        <dbReference type="ChEBI" id="CHEBI:37563"/>
        <note>allosteric inhibitor</note>
    </ligand>
</feature>
<feature type="binding site" evidence="1">
    <location>
        <position position="225"/>
    </location>
    <ligand>
        <name>UTP</name>
        <dbReference type="ChEBI" id="CHEBI:46398"/>
    </ligand>
</feature>
<feature type="binding site" evidence="1">
    <location>
        <position position="243"/>
    </location>
    <ligand>
        <name>ATP</name>
        <dbReference type="ChEBI" id="CHEBI:30616"/>
    </ligand>
</feature>
<feature type="binding site" evidence="1">
    <location>
        <position position="359"/>
    </location>
    <ligand>
        <name>L-glutamine</name>
        <dbReference type="ChEBI" id="CHEBI:58359"/>
    </ligand>
</feature>
<feature type="binding site" evidence="1">
    <location>
        <begin position="387"/>
        <end position="390"/>
    </location>
    <ligand>
        <name>L-glutamine</name>
        <dbReference type="ChEBI" id="CHEBI:58359"/>
    </ligand>
</feature>
<feature type="binding site" evidence="1">
    <location>
        <position position="410"/>
    </location>
    <ligand>
        <name>L-glutamine</name>
        <dbReference type="ChEBI" id="CHEBI:58359"/>
    </ligand>
</feature>
<feature type="binding site" evidence="1">
    <location>
        <position position="467"/>
    </location>
    <ligand>
        <name>L-glutamine</name>
        <dbReference type="ChEBI" id="CHEBI:58359"/>
    </ligand>
</feature>
<feature type="strand" evidence="4">
    <location>
        <begin position="4"/>
        <end position="9"/>
    </location>
</feature>
<feature type="turn" evidence="4">
    <location>
        <begin position="14"/>
        <end position="17"/>
    </location>
</feature>
<feature type="helix" evidence="4">
    <location>
        <begin position="18"/>
        <end position="31"/>
    </location>
</feature>
<feature type="strand" evidence="4">
    <location>
        <begin position="36"/>
        <end position="42"/>
    </location>
</feature>
<feature type="strand" evidence="4">
    <location>
        <begin position="44"/>
        <end position="49"/>
    </location>
</feature>
<feature type="helix" evidence="4">
    <location>
        <begin position="54"/>
        <end position="57"/>
    </location>
</feature>
<feature type="helix" evidence="4">
    <location>
        <begin position="72"/>
        <end position="80"/>
    </location>
</feature>
<feature type="helix" evidence="4">
    <location>
        <begin position="86"/>
        <end position="88"/>
    </location>
</feature>
<feature type="strand" evidence="4">
    <location>
        <begin position="89"/>
        <end position="91"/>
    </location>
</feature>
<feature type="helix" evidence="4">
    <location>
        <begin position="92"/>
        <end position="104"/>
    </location>
</feature>
<feature type="turn" evidence="4">
    <location>
        <begin position="105"/>
        <end position="110"/>
    </location>
</feature>
<feature type="helix" evidence="4">
    <location>
        <begin position="115"/>
        <end position="134"/>
    </location>
</feature>
<feature type="strand" evidence="4">
    <location>
        <begin position="137"/>
        <end position="143"/>
    </location>
</feature>
<feature type="helix" evidence="4">
    <location>
        <begin position="150"/>
        <end position="152"/>
    </location>
</feature>
<feature type="helix" evidence="4">
    <location>
        <begin position="153"/>
        <end position="166"/>
    </location>
</feature>
<feature type="turn" evidence="4">
    <location>
        <begin position="168"/>
        <end position="170"/>
    </location>
</feature>
<feature type="strand" evidence="4">
    <location>
        <begin position="171"/>
        <end position="178"/>
    </location>
</feature>
<feature type="turn" evidence="4">
    <location>
        <begin position="183"/>
        <end position="185"/>
    </location>
</feature>
<feature type="strand" evidence="4">
    <location>
        <begin position="186"/>
        <end position="188"/>
    </location>
</feature>
<feature type="helix" evidence="4">
    <location>
        <begin position="191"/>
        <end position="203"/>
    </location>
</feature>
<feature type="strand" evidence="4">
    <location>
        <begin position="208"/>
        <end position="216"/>
    </location>
</feature>
<feature type="helix" evidence="4">
    <location>
        <begin position="220"/>
        <end position="229"/>
    </location>
</feature>
<feature type="helix" evidence="4">
    <location>
        <begin position="234"/>
        <end position="236"/>
    </location>
</feature>
<feature type="strand" evidence="4">
    <location>
        <begin position="237"/>
        <end position="241"/>
    </location>
</feature>
<feature type="helix" evidence="4">
    <location>
        <begin position="246"/>
        <end position="248"/>
    </location>
</feature>
<feature type="helix" evidence="4">
    <location>
        <begin position="249"/>
        <end position="256"/>
    </location>
</feature>
<feature type="helix" evidence="4">
    <location>
        <begin position="258"/>
        <end position="265"/>
    </location>
</feature>
<feature type="helix" evidence="4">
    <location>
        <begin position="276"/>
        <end position="286"/>
    </location>
</feature>
<feature type="turn" evidence="4">
    <location>
        <begin position="287"/>
        <end position="289"/>
    </location>
</feature>
<feature type="strand" evidence="4">
    <location>
        <begin position="293"/>
        <end position="301"/>
    </location>
</feature>
<feature type="helix" evidence="4">
    <location>
        <begin position="306"/>
        <end position="309"/>
    </location>
</feature>
<feature type="helix" evidence="4">
    <location>
        <begin position="310"/>
        <end position="322"/>
    </location>
</feature>
<feature type="strand" evidence="4">
    <location>
        <begin position="326"/>
        <end position="333"/>
    </location>
</feature>
<feature type="helix" evidence="4">
    <location>
        <begin position="334"/>
        <end position="337"/>
    </location>
</feature>
<feature type="strand" evidence="4">
    <location>
        <begin position="340"/>
        <end position="342"/>
    </location>
</feature>
<feature type="turn" evidence="4">
    <location>
        <begin position="345"/>
        <end position="349"/>
    </location>
</feature>
<feature type="strand" evidence="4">
    <location>
        <begin position="352"/>
        <end position="356"/>
    </location>
</feature>
<feature type="helix" evidence="4">
    <location>
        <begin position="365"/>
        <end position="378"/>
    </location>
</feature>
<feature type="strand" evidence="4">
    <location>
        <begin position="382"/>
        <end position="385"/>
    </location>
</feature>
<feature type="helix" evidence="4">
    <location>
        <begin position="387"/>
        <end position="398"/>
    </location>
</feature>
<feature type="turn" evidence="4">
    <location>
        <begin position="399"/>
        <end position="401"/>
    </location>
</feature>
<feature type="turn" evidence="4">
    <location>
        <begin position="409"/>
        <end position="411"/>
    </location>
</feature>
<feature type="strand" evidence="4">
    <location>
        <begin position="418"/>
        <end position="421"/>
    </location>
</feature>
<feature type="strand" evidence="4">
    <location>
        <begin position="425"/>
        <end position="427"/>
    </location>
</feature>
<feature type="strand" evidence="4">
    <location>
        <begin position="437"/>
        <end position="445"/>
    </location>
</feature>
<feature type="helix" evidence="4">
    <location>
        <begin position="450"/>
        <end position="455"/>
    </location>
</feature>
<feature type="strand" evidence="4">
    <location>
        <begin position="457"/>
        <end position="466"/>
    </location>
</feature>
<feature type="helix" evidence="4">
    <location>
        <begin position="472"/>
        <end position="480"/>
    </location>
</feature>
<feature type="strand" evidence="4">
    <location>
        <begin position="484"/>
        <end position="488"/>
    </location>
</feature>
<feature type="strand" evidence="4">
    <location>
        <begin position="494"/>
        <end position="498"/>
    </location>
</feature>
<feature type="strand" evidence="4">
    <location>
        <begin position="505"/>
        <end position="510"/>
    </location>
</feature>
<feature type="helix" evidence="4">
    <location>
        <begin position="512"/>
        <end position="515"/>
    </location>
</feature>
<feature type="strand" evidence="4">
    <location>
        <begin position="518"/>
        <end position="520"/>
    </location>
</feature>
<feature type="helix" evidence="4">
    <location>
        <begin position="523"/>
        <end position="532"/>
    </location>
</feature>
<reference key="1">
    <citation type="journal article" date="2001" name="Proc. Natl. Acad. Sci. U.S.A.">
        <title>The complete genome of the crenarchaeon Sulfolobus solfataricus P2.</title>
        <authorList>
            <person name="She Q."/>
            <person name="Singh R.K."/>
            <person name="Confalonieri F."/>
            <person name="Zivanovic Y."/>
            <person name="Allard G."/>
            <person name="Awayez M.J."/>
            <person name="Chan-Weiher C.C.-Y."/>
            <person name="Clausen I.G."/>
            <person name="Curtis B.A."/>
            <person name="De Moors A."/>
            <person name="Erauso G."/>
            <person name="Fletcher C."/>
            <person name="Gordon P.M.K."/>
            <person name="Heikamp-de Jong I."/>
            <person name="Jeffries A.C."/>
            <person name="Kozera C.J."/>
            <person name="Medina N."/>
            <person name="Peng X."/>
            <person name="Thi-Ngoc H.P."/>
            <person name="Redder P."/>
            <person name="Schenk M.E."/>
            <person name="Theriault C."/>
            <person name="Tolstrup N."/>
            <person name="Charlebois R.L."/>
            <person name="Doolittle W.F."/>
            <person name="Duguet M."/>
            <person name="Gaasterland T."/>
            <person name="Garrett R.A."/>
            <person name="Ragan M.A."/>
            <person name="Sensen C.W."/>
            <person name="Van der Oost J."/>
        </authorList>
    </citation>
    <scope>NUCLEOTIDE SEQUENCE [LARGE SCALE GENOMIC DNA]</scope>
    <source>
        <strain>ATCC 35092 / DSM 1617 / JCM 11322 / P2</strain>
    </source>
</reference>
<reference key="2">
    <citation type="journal article" date="2011" name="Acta Crystallogr. F">
        <title>Structure of the dimeric form of CTP synthase from Sulfolobus solfataricus.</title>
        <authorList>
            <person name="Lauritsen I."/>
            <person name="Willemoes M."/>
            <person name="Jensen K.F."/>
            <person name="Johansson E."/>
            <person name="Harris P."/>
        </authorList>
    </citation>
    <scope>X-RAY CRYSTALLOGRAPHY (2.50 ANGSTROMS)</scope>
    <scope>FUNCTION</scope>
    <scope>CATALYTIC ACTIVITY</scope>
    <scope>SUBUNIT</scope>
    <source>
        <strain>ATCC 35092 / DSM 1617 / JCM 11322 / P2</strain>
    </source>
</reference>